<reference key="1">
    <citation type="journal article" date="2008" name="J. Bacteriol.">
        <title>Complete genome sequence of the mosquitocidal bacterium Bacillus sphaericus C3-41 and comparison with those of closely related Bacillus species.</title>
        <authorList>
            <person name="Hu X."/>
            <person name="Fan W."/>
            <person name="Han B."/>
            <person name="Liu H."/>
            <person name="Zheng D."/>
            <person name="Li Q."/>
            <person name="Dong W."/>
            <person name="Yan J."/>
            <person name="Gao M."/>
            <person name="Berry C."/>
            <person name="Yuan Z."/>
        </authorList>
    </citation>
    <scope>NUCLEOTIDE SEQUENCE [LARGE SCALE GENOMIC DNA]</scope>
    <source>
        <strain>C3-41</strain>
    </source>
</reference>
<evidence type="ECO:0000255" key="1">
    <source>
        <dbReference type="HAMAP-Rule" id="MF_01451"/>
    </source>
</evidence>
<comment type="function">
    <text evidence="1">The heterodimer acts as both an ATP-dependent DNA helicase and an ATP-dependent, dual-direction single-stranded exonuclease. Recognizes the chi site generating a DNA molecule suitable for the initiation of homologous recombination. The AddA nuclease domain is required for chi fragment generation; this subunit has the helicase and 3' -&gt; 5' nuclease activities.</text>
</comment>
<comment type="catalytic activity">
    <reaction evidence="1">
        <text>Couples ATP hydrolysis with the unwinding of duplex DNA by translocating in the 3'-5' direction.</text>
        <dbReference type="EC" id="5.6.2.4"/>
    </reaction>
</comment>
<comment type="catalytic activity">
    <reaction evidence="1">
        <text>ATP + H2O = ADP + phosphate + H(+)</text>
        <dbReference type="Rhea" id="RHEA:13065"/>
        <dbReference type="ChEBI" id="CHEBI:15377"/>
        <dbReference type="ChEBI" id="CHEBI:15378"/>
        <dbReference type="ChEBI" id="CHEBI:30616"/>
        <dbReference type="ChEBI" id="CHEBI:43474"/>
        <dbReference type="ChEBI" id="CHEBI:456216"/>
        <dbReference type="EC" id="5.6.2.4"/>
    </reaction>
</comment>
<comment type="cofactor">
    <cofactor evidence="1">
        <name>Mg(2+)</name>
        <dbReference type="ChEBI" id="CHEBI:18420"/>
    </cofactor>
</comment>
<comment type="subunit">
    <text evidence="1">Heterodimer of AddA and AddB/RexB.</text>
</comment>
<comment type="similarity">
    <text evidence="1">Belongs to the helicase family. AddA subfamily.</text>
</comment>
<sequence>MVQTIPIKPADVSWTDDQWKAIYASGQDTLVSAAAGSGKTAVLINRMIEKVIATDNPINVDELLVVTFTNASAAEMRHRMSEALEKAIVENPTSSHLRRQLSLINKAQISTLHSFCLAIVKQYAYLLDIDPGFRIANEAEVALLRDDIVADVLEGAYDSEEETQVQAIYRLVDSFTSDRDDQAIETLISKLYDTSRVHAEPQRWLWSLPKAYELAEEVTIDDLELSHYVKLTVRHSLEEAFVLISEMRAITLQPDGPAPYAETAEIDFAMIQEGIRISQEGTWQELFDYFATVKWSTLKRVSKDALVDVELQELAKKKREAAKKIMNKMKETYFIRTPARLLEEIRLMAPIIGTLVELTTIFSEQFRLAKLERGIIDFSDLEHYALQILTVEVDGELQPSPVALDLKKRFKEVLVDEYQDTNMLQETILQLVKSGEEQDGNLFMVGDVKQSIYRFRLAEPKLFMRKYSEFLETPDATGMRIDLNANFRSRKEVLNVTNYIFAQIMGERVGEILYDDNASLKPAAPYDEKEVPVELVVMHPPQDEETVDEQEDKTDEASELEELKKSQYEARFIIDRIRQMMEDGTTVYDTKSMTERPLKYSDIVILMRSMTWSTDLVEEFKLAGIPLYAESSKGYFDALEVMIILNVLKVVDNPYQDIPLASVLRAPFVGLTENELAKIRLADSKVPFYDALRQFIRSEGQGVQTTTFEKLQRFMLAFENWRDLARRGSLSDLIWKIYLDTHYYEMVGAMPNGKQRQANLRILHDRALMYEQTAFRGLFRFLRFIDRMRTRGDDLGTAKSIGEKDDVVRLVTIHSSKGLEYPVVFVAGMGRPFNKMDFHHPYLFDQDFGLAVKAIDPENRITYTSLPFLALKEKKELEMRAEEMRVLYVAMTRAKERLILVGSVKNWEKTRDNWQDAQNIPSDAPLQEYLRARANSYLDWIGPAVARHGDFASQATTSYKELDSPSHWWIQPIDTRHYSYDIQAFNDEIQQHLTTQEDEALLSEIKARFHAQYTYQKSTRKRSKTSVSEIKRLENLQRQEEPEYYFATPAKRTSTSIAPRPTFLQDQQLTGTEIGTAVHTVMQHIPQFGFDTIEAVKGFVANLVAKQLLTEAEGKVVPIKKVYHFFHTEIGQRFKQARQIRREMPFTISRVDEDGDAQIVQGIIDCLFEDEYGNWVLLDYKTDRILPHFAKEPALTKEIMGRYAVQLRVYSEAIESILQIKVSEKVLYLFDNEQTVQA</sequence>
<feature type="chain" id="PRO_0000379300" description="ATP-dependent helicase/nuclease subunit A">
    <location>
        <begin position="1"/>
        <end position="1238"/>
    </location>
</feature>
<feature type="domain" description="UvrD-like helicase ATP-binding" evidence="1">
    <location>
        <begin position="12"/>
        <end position="490"/>
    </location>
</feature>
<feature type="domain" description="UvrD-like helicase C-terminal" evidence="1">
    <location>
        <begin position="510"/>
        <end position="818"/>
    </location>
</feature>
<feature type="binding site" evidence="1">
    <location>
        <begin position="33"/>
        <end position="40"/>
    </location>
    <ligand>
        <name>ATP</name>
        <dbReference type="ChEBI" id="CHEBI:30616"/>
    </ligand>
</feature>
<protein>
    <recommendedName>
        <fullName evidence="1">ATP-dependent helicase/nuclease subunit A</fullName>
        <ecNumber evidence="1">3.1.-.-</ecNumber>
        <ecNumber evidence="1">5.6.2.4</ecNumber>
    </recommendedName>
    <alternativeName>
        <fullName evidence="1">ATP-dependent helicase/nuclease AddA</fullName>
    </alternativeName>
    <alternativeName>
        <fullName evidence="1">DNA 3'-5' helicase AddA</fullName>
    </alternativeName>
</protein>
<accession>B1HN90</accession>
<proteinExistence type="inferred from homology"/>
<dbReference type="EC" id="3.1.-.-" evidence="1"/>
<dbReference type="EC" id="5.6.2.4" evidence="1"/>
<dbReference type="EMBL" id="CP000817">
    <property type="protein sequence ID" value="ACA38807.1"/>
    <property type="molecule type" value="Genomic_DNA"/>
</dbReference>
<dbReference type="RefSeq" id="WP_012292938.1">
    <property type="nucleotide sequence ID" value="NC_010382.1"/>
</dbReference>
<dbReference type="SMR" id="B1HN90"/>
<dbReference type="EnsemblBacteria" id="ACA38807">
    <property type="protein sequence ID" value="ACA38807"/>
    <property type="gene ID" value="Bsph_1199"/>
</dbReference>
<dbReference type="KEGG" id="lsp:Bsph_1199"/>
<dbReference type="HOGENOM" id="CLU_001114_3_1_9"/>
<dbReference type="Proteomes" id="UP000002164">
    <property type="component" value="Chromosome"/>
</dbReference>
<dbReference type="GO" id="GO:0005829">
    <property type="term" value="C:cytosol"/>
    <property type="evidence" value="ECO:0007669"/>
    <property type="project" value="TreeGrafter"/>
</dbReference>
<dbReference type="GO" id="GO:0033202">
    <property type="term" value="C:DNA helicase complex"/>
    <property type="evidence" value="ECO:0007669"/>
    <property type="project" value="TreeGrafter"/>
</dbReference>
<dbReference type="GO" id="GO:0043138">
    <property type="term" value="F:3'-5' DNA helicase activity"/>
    <property type="evidence" value="ECO:0007669"/>
    <property type="project" value="UniProtKB-UniRule"/>
</dbReference>
<dbReference type="GO" id="GO:0008408">
    <property type="term" value="F:3'-5' exonuclease activity"/>
    <property type="evidence" value="ECO:0007669"/>
    <property type="project" value="UniProtKB-UniRule"/>
</dbReference>
<dbReference type="GO" id="GO:0005524">
    <property type="term" value="F:ATP binding"/>
    <property type="evidence" value="ECO:0007669"/>
    <property type="project" value="UniProtKB-UniRule"/>
</dbReference>
<dbReference type="GO" id="GO:0016887">
    <property type="term" value="F:ATP hydrolysis activity"/>
    <property type="evidence" value="ECO:0007669"/>
    <property type="project" value="RHEA"/>
</dbReference>
<dbReference type="GO" id="GO:0003690">
    <property type="term" value="F:double-stranded DNA binding"/>
    <property type="evidence" value="ECO:0007669"/>
    <property type="project" value="UniProtKB-UniRule"/>
</dbReference>
<dbReference type="GO" id="GO:0000724">
    <property type="term" value="P:double-strand break repair via homologous recombination"/>
    <property type="evidence" value="ECO:0007669"/>
    <property type="project" value="UniProtKB-UniRule"/>
</dbReference>
<dbReference type="FunFam" id="3.40.50.300:FF:001236">
    <property type="entry name" value="ATP-dependent helicase/nuclease subunit A"/>
    <property type="match status" value="1"/>
</dbReference>
<dbReference type="Gene3D" id="3.90.320.10">
    <property type="match status" value="1"/>
</dbReference>
<dbReference type="Gene3D" id="3.40.50.300">
    <property type="entry name" value="P-loop containing nucleotide triphosphate hydrolases"/>
    <property type="match status" value="4"/>
</dbReference>
<dbReference type="HAMAP" id="MF_01451">
    <property type="entry name" value="AddA"/>
    <property type="match status" value="1"/>
</dbReference>
<dbReference type="InterPro" id="IPR014152">
    <property type="entry name" value="AddA"/>
</dbReference>
<dbReference type="InterPro" id="IPR014017">
    <property type="entry name" value="DNA_helicase_UvrD-like_C"/>
</dbReference>
<dbReference type="InterPro" id="IPR000212">
    <property type="entry name" value="DNA_helicase_UvrD/REP"/>
</dbReference>
<dbReference type="InterPro" id="IPR027417">
    <property type="entry name" value="P-loop_NTPase"/>
</dbReference>
<dbReference type="InterPro" id="IPR011604">
    <property type="entry name" value="PDDEXK-like_dom_sf"/>
</dbReference>
<dbReference type="InterPro" id="IPR038726">
    <property type="entry name" value="PDDEXK_AddAB-type"/>
</dbReference>
<dbReference type="InterPro" id="IPR011335">
    <property type="entry name" value="Restrct_endonuc-II-like"/>
</dbReference>
<dbReference type="InterPro" id="IPR014016">
    <property type="entry name" value="UvrD-like_ATP-bd"/>
</dbReference>
<dbReference type="NCBIfam" id="TIGR02785">
    <property type="entry name" value="addA_Gpos"/>
    <property type="match status" value="1"/>
</dbReference>
<dbReference type="PANTHER" id="PTHR11070:SF48">
    <property type="entry name" value="ATP-DEPENDENT HELICASE_NUCLEASE SUBUNIT A"/>
    <property type="match status" value="1"/>
</dbReference>
<dbReference type="PANTHER" id="PTHR11070">
    <property type="entry name" value="UVRD / RECB / PCRA DNA HELICASE FAMILY MEMBER"/>
    <property type="match status" value="1"/>
</dbReference>
<dbReference type="Pfam" id="PF12705">
    <property type="entry name" value="PDDEXK_1"/>
    <property type="match status" value="1"/>
</dbReference>
<dbReference type="Pfam" id="PF00580">
    <property type="entry name" value="UvrD-helicase"/>
    <property type="match status" value="1"/>
</dbReference>
<dbReference type="Pfam" id="PF13361">
    <property type="entry name" value="UvrD_C"/>
    <property type="match status" value="1"/>
</dbReference>
<dbReference type="SUPFAM" id="SSF52540">
    <property type="entry name" value="P-loop containing nucleoside triphosphate hydrolases"/>
    <property type="match status" value="1"/>
</dbReference>
<dbReference type="SUPFAM" id="SSF52980">
    <property type="entry name" value="Restriction endonuclease-like"/>
    <property type="match status" value="1"/>
</dbReference>
<dbReference type="PROSITE" id="PS51198">
    <property type="entry name" value="UVRD_HELICASE_ATP_BIND"/>
    <property type="match status" value="1"/>
</dbReference>
<dbReference type="PROSITE" id="PS51217">
    <property type="entry name" value="UVRD_HELICASE_CTER"/>
    <property type="match status" value="1"/>
</dbReference>
<keyword id="KW-0067">ATP-binding</keyword>
<keyword id="KW-0227">DNA damage</keyword>
<keyword id="KW-0234">DNA repair</keyword>
<keyword id="KW-0238">DNA-binding</keyword>
<keyword id="KW-0269">Exonuclease</keyword>
<keyword id="KW-0347">Helicase</keyword>
<keyword id="KW-0378">Hydrolase</keyword>
<keyword id="KW-0413">Isomerase</keyword>
<keyword id="KW-0540">Nuclease</keyword>
<keyword id="KW-0547">Nucleotide-binding</keyword>
<organism>
    <name type="scientific">Lysinibacillus sphaericus (strain C3-41)</name>
    <dbReference type="NCBI Taxonomy" id="444177"/>
    <lineage>
        <taxon>Bacteria</taxon>
        <taxon>Bacillati</taxon>
        <taxon>Bacillota</taxon>
        <taxon>Bacilli</taxon>
        <taxon>Bacillales</taxon>
        <taxon>Bacillaceae</taxon>
        <taxon>Lysinibacillus</taxon>
    </lineage>
</organism>
<name>ADDA_LYSSC</name>
<gene>
    <name evidence="1" type="primary">addA</name>
    <name type="ordered locus">Bsph_1199</name>
</gene>